<dbReference type="EMBL" id="CP000319">
    <property type="protein sequence ID" value="ABE64254.1"/>
    <property type="molecule type" value="Genomic_DNA"/>
</dbReference>
<dbReference type="RefSeq" id="WP_011511896.1">
    <property type="nucleotide sequence ID" value="NC_007964.1"/>
</dbReference>
<dbReference type="SMR" id="Q1QHP3"/>
<dbReference type="STRING" id="323097.Nham_3525"/>
<dbReference type="KEGG" id="nha:Nham_3525"/>
<dbReference type="eggNOG" id="COG0217">
    <property type="taxonomic scope" value="Bacteria"/>
</dbReference>
<dbReference type="HOGENOM" id="CLU_062974_2_2_5"/>
<dbReference type="OrthoDB" id="9781053at2"/>
<dbReference type="Proteomes" id="UP000001953">
    <property type="component" value="Chromosome"/>
</dbReference>
<dbReference type="GO" id="GO:0005829">
    <property type="term" value="C:cytosol"/>
    <property type="evidence" value="ECO:0007669"/>
    <property type="project" value="TreeGrafter"/>
</dbReference>
<dbReference type="GO" id="GO:0003677">
    <property type="term" value="F:DNA binding"/>
    <property type="evidence" value="ECO:0007669"/>
    <property type="project" value="UniProtKB-UniRule"/>
</dbReference>
<dbReference type="GO" id="GO:0006355">
    <property type="term" value="P:regulation of DNA-templated transcription"/>
    <property type="evidence" value="ECO:0007669"/>
    <property type="project" value="UniProtKB-UniRule"/>
</dbReference>
<dbReference type="FunFam" id="1.10.10.200:FF:000002">
    <property type="entry name" value="Probable transcriptional regulatory protein CLM62_37755"/>
    <property type="match status" value="1"/>
</dbReference>
<dbReference type="Gene3D" id="1.10.10.200">
    <property type="match status" value="1"/>
</dbReference>
<dbReference type="Gene3D" id="3.30.70.980">
    <property type="match status" value="2"/>
</dbReference>
<dbReference type="HAMAP" id="MF_00693">
    <property type="entry name" value="Transcrip_reg_TACO1"/>
    <property type="match status" value="1"/>
</dbReference>
<dbReference type="InterPro" id="IPR017856">
    <property type="entry name" value="Integrase-like_N"/>
</dbReference>
<dbReference type="InterPro" id="IPR048300">
    <property type="entry name" value="TACO1_YebC-like_2nd/3rd_dom"/>
</dbReference>
<dbReference type="InterPro" id="IPR049083">
    <property type="entry name" value="TACO1_YebC_N"/>
</dbReference>
<dbReference type="InterPro" id="IPR002876">
    <property type="entry name" value="Transcrip_reg_TACO1-like"/>
</dbReference>
<dbReference type="InterPro" id="IPR026564">
    <property type="entry name" value="Transcrip_reg_TACO1-like_dom3"/>
</dbReference>
<dbReference type="InterPro" id="IPR029072">
    <property type="entry name" value="YebC-like"/>
</dbReference>
<dbReference type="NCBIfam" id="NF001030">
    <property type="entry name" value="PRK00110.1"/>
    <property type="match status" value="1"/>
</dbReference>
<dbReference type="NCBIfam" id="NF009044">
    <property type="entry name" value="PRK12378.1"/>
    <property type="match status" value="1"/>
</dbReference>
<dbReference type="NCBIfam" id="TIGR01033">
    <property type="entry name" value="YebC/PmpR family DNA-binding transcriptional regulator"/>
    <property type="match status" value="1"/>
</dbReference>
<dbReference type="PANTHER" id="PTHR12532:SF6">
    <property type="entry name" value="TRANSCRIPTIONAL REGULATORY PROTEIN YEBC-RELATED"/>
    <property type="match status" value="1"/>
</dbReference>
<dbReference type="PANTHER" id="PTHR12532">
    <property type="entry name" value="TRANSLATIONAL ACTIVATOR OF CYTOCHROME C OXIDASE 1"/>
    <property type="match status" value="1"/>
</dbReference>
<dbReference type="Pfam" id="PF20772">
    <property type="entry name" value="TACO1_YebC_N"/>
    <property type="match status" value="1"/>
</dbReference>
<dbReference type="Pfam" id="PF01709">
    <property type="entry name" value="Transcrip_reg"/>
    <property type="match status" value="1"/>
</dbReference>
<dbReference type="SUPFAM" id="SSF75625">
    <property type="entry name" value="YebC-like"/>
    <property type="match status" value="1"/>
</dbReference>
<sequence length="248" mass="26973">MAGHSQFKNIMHRKGRQDAQKSKLFSKLAREITVAAKLGTPDPAMNARLRAAMIAARAENMPKDNIERAIKKASGHDAESYDELRYEGYGPGGVAIIMEVLTDNRNRAASDIRSYFTKSGGNLGETGSVSFMFDRLGVVEYDADKASADDMLEAAVEAGADDVVSGEGGHEIYASQETFRDVARALEGKFGEARKVALIWKPQNTVAVDDNTGEKLLKLIDLLNEHDDVQNVYANFEVSDALMAKLGG</sequence>
<proteinExistence type="inferred from homology"/>
<reference key="1">
    <citation type="submission" date="2006-03" db="EMBL/GenBank/DDBJ databases">
        <title>Complete sequence of chromosome of Nitrobacter hamburgensis X14.</title>
        <authorList>
            <consortium name="US DOE Joint Genome Institute"/>
            <person name="Copeland A."/>
            <person name="Lucas S."/>
            <person name="Lapidus A."/>
            <person name="Barry K."/>
            <person name="Detter J.C."/>
            <person name="Glavina del Rio T."/>
            <person name="Hammon N."/>
            <person name="Israni S."/>
            <person name="Dalin E."/>
            <person name="Tice H."/>
            <person name="Pitluck S."/>
            <person name="Chain P."/>
            <person name="Malfatti S."/>
            <person name="Shin M."/>
            <person name="Vergez L."/>
            <person name="Schmutz J."/>
            <person name="Larimer F."/>
            <person name="Land M."/>
            <person name="Hauser L."/>
            <person name="Kyrpides N."/>
            <person name="Ivanova N."/>
            <person name="Ward B."/>
            <person name="Arp D."/>
            <person name="Klotz M."/>
            <person name="Stein L."/>
            <person name="O'Mullan G."/>
            <person name="Starkenburg S."/>
            <person name="Sayavedra L."/>
            <person name="Poret-Peterson A.T."/>
            <person name="Gentry M.E."/>
            <person name="Bruce D."/>
            <person name="Richardson P."/>
        </authorList>
    </citation>
    <scope>NUCLEOTIDE SEQUENCE [LARGE SCALE GENOMIC DNA]</scope>
    <source>
        <strain>DSM 10229 / NCIMB 13809 / X14</strain>
    </source>
</reference>
<organism>
    <name type="scientific">Nitrobacter hamburgensis (strain DSM 10229 / NCIMB 13809 / X14)</name>
    <dbReference type="NCBI Taxonomy" id="323097"/>
    <lineage>
        <taxon>Bacteria</taxon>
        <taxon>Pseudomonadati</taxon>
        <taxon>Pseudomonadota</taxon>
        <taxon>Alphaproteobacteria</taxon>
        <taxon>Hyphomicrobiales</taxon>
        <taxon>Nitrobacteraceae</taxon>
        <taxon>Nitrobacter</taxon>
    </lineage>
</organism>
<keyword id="KW-0963">Cytoplasm</keyword>
<keyword id="KW-0238">DNA-binding</keyword>
<keyword id="KW-1185">Reference proteome</keyword>
<keyword id="KW-0804">Transcription</keyword>
<keyword id="KW-0805">Transcription regulation</keyword>
<gene>
    <name type="ordered locus">Nham_3525</name>
</gene>
<feature type="chain" id="PRO_0000257088" description="Probable transcriptional regulatory protein Nham_3525">
    <location>
        <begin position="1"/>
        <end position="248"/>
    </location>
</feature>
<feature type="region of interest" description="Disordered" evidence="2">
    <location>
        <begin position="1"/>
        <end position="21"/>
    </location>
</feature>
<protein>
    <recommendedName>
        <fullName evidence="1">Probable transcriptional regulatory protein Nham_3525</fullName>
    </recommendedName>
</protein>
<evidence type="ECO:0000255" key="1">
    <source>
        <dbReference type="HAMAP-Rule" id="MF_00693"/>
    </source>
</evidence>
<evidence type="ECO:0000256" key="2">
    <source>
        <dbReference type="SAM" id="MobiDB-lite"/>
    </source>
</evidence>
<comment type="subcellular location">
    <subcellularLocation>
        <location evidence="1">Cytoplasm</location>
    </subcellularLocation>
</comment>
<comment type="similarity">
    <text evidence="1">Belongs to the TACO1 family.</text>
</comment>
<name>Y3525_NITHX</name>
<accession>Q1QHP3</accession>